<sequence length="324" mass="35778">MANMFALILVIATLVTGILWCVDKFVFAPKRRARQAAAQTASGDALDNATLNKVAPKPGWLETGASVFPVLAIVLIVRSFLYEPFQIPSGSMMPTLLIGDFILVEKFAYGIKDPIYQKTLIETGHPKRGDIVVFKYPEDPKLDYIKRAVGLPGDKITYDPVAKEVTIQPGCSSGQACENALPVTYSNVEPSDFVQTFARRNGGEATSGFFEVPLNETKENGIRLTERKETLGDVTHRILMVPIAQDQLGMYYQQPGQPLATWVVPPGQYFMMGDNRDNSADSRYWGFVPEANLVGKAVAIWMSFDKQEGEWPTGVRLSRIGGIH</sequence>
<gene>
    <name type="primary">lepB</name>
    <name type="ordered locus">STM2582</name>
</gene>
<dbReference type="EC" id="3.4.21.89"/>
<dbReference type="EMBL" id="X54933">
    <property type="protein sequence ID" value="CAA38694.1"/>
    <property type="molecule type" value="Genomic_DNA"/>
</dbReference>
<dbReference type="EMBL" id="AE006468">
    <property type="protein sequence ID" value="AAL21476.1"/>
    <property type="molecule type" value="Genomic_DNA"/>
</dbReference>
<dbReference type="PIR" id="S12020">
    <property type="entry name" value="S12020"/>
</dbReference>
<dbReference type="RefSeq" id="NP_461517.1">
    <property type="nucleotide sequence ID" value="NC_003197.2"/>
</dbReference>
<dbReference type="RefSeq" id="WP_000002559.1">
    <property type="nucleotide sequence ID" value="NC_003197.2"/>
</dbReference>
<dbReference type="SMR" id="P0A1W2"/>
<dbReference type="STRING" id="99287.STM2582"/>
<dbReference type="MEROPS" id="S26.001"/>
<dbReference type="PaxDb" id="99287-STM2582"/>
<dbReference type="GeneID" id="1254104"/>
<dbReference type="KEGG" id="stm:STM2582"/>
<dbReference type="PATRIC" id="fig|99287.12.peg.2723"/>
<dbReference type="HOGENOM" id="CLU_028723_1_1_6"/>
<dbReference type="OMA" id="FKWAPAR"/>
<dbReference type="PhylomeDB" id="P0A1W2"/>
<dbReference type="BioCyc" id="SENT99287:STM2582-MONOMER"/>
<dbReference type="Proteomes" id="UP000001014">
    <property type="component" value="Chromosome"/>
</dbReference>
<dbReference type="GO" id="GO:0005886">
    <property type="term" value="C:plasma membrane"/>
    <property type="evidence" value="ECO:0000318"/>
    <property type="project" value="GO_Central"/>
</dbReference>
<dbReference type="GO" id="GO:0004252">
    <property type="term" value="F:serine-type endopeptidase activity"/>
    <property type="evidence" value="ECO:0000318"/>
    <property type="project" value="GO_Central"/>
</dbReference>
<dbReference type="GO" id="GO:0006465">
    <property type="term" value="P:signal peptide processing"/>
    <property type="evidence" value="ECO:0000318"/>
    <property type="project" value="GO_Central"/>
</dbReference>
<dbReference type="CDD" id="cd06530">
    <property type="entry name" value="S26_SPase_I"/>
    <property type="match status" value="1"/>
</dbReference>
<dbReference type="FunFam" id="2.170.230.10:FF:000001">
    <property type="entry name" value="Signal peptidase I"/>
    <property type="match status" value="1"/>
</dbReference>
<dbReference type="Gene3D" id="2.170.230.10">
    <property type="match status" value="1"/>
</dbReference>
<dbReference type="Gene3D" id="2.10.109.10">
    <property type="entry name" value="Umud Fragment, subunit A"/>
    <property type="match status" value="1"/>
</dbReference>
<dbReference type="InterPro" id="IPR036286">
    <property type="entry name" value="LexA/Signal_pep-like_sf"/>
</dbReference>
<dbReference type="InterPro" id="IPR000223">
    <property type="entry name" value="Pept_S26A_signal_pept_1"/>
</dbReference>
<dbReference type="InterPro" id="IPR019758">
    <property type="entry name" value="Pept_S26A_signal_pept_1_CS"/>
</dbReference>
<dbReference type="InterPro" id="IPR019757">
    <property type="entry name" value="Pept_S26A_signal_pept_1_Lys-AS"/>
</dbReference>
<dbReference type="InterPro" id="IPR019756">
    <property type="entry name" value="Pept_S26A_signal_pept_1_Ser-AS"/>
</dbReference>
<dbReference type="InterPro" id="IPR019533">
    <property type="entry name" value="Peptidase_S26"/>
</dbReference>
<dbReference type="InterPro" id="IPR019766">
    <property type="entry name" value="Sign_pep_all-beta_subdom"/>
</dbReference>
<dbReference type="NCBIfam" id="NF008114">
    <property type="entry name" value="PRK10861.1"/>
    <property type="match status" value="1"/>
</dbReference>
<dbReference type="NCBIfam" id="TIGR02227">
    <property type="entry name" value="sigpep_I_bact"/>
    <property type="match status" value="2"/>
</dbReference>
<dbReference type="PANTHER" id="PTHR43390:SF1">
    <property type="entry name" value="CHLOROPLAST PROCESSING PEPTIDASE"/>
    <property type="match status" value="1"/>
</dbReference>
<dbReference type="PANTHER" id="PTHR43390">
    <property type="entry name" value="SIGNAL PEPTIDASE I"/>
    <property type="match status" value="1"/>
</dbReference>
<dbReference type="Pfam" id="PF10502">
    <property type="entry name" value="Peptidase_S26"/>
    <property type="match status" value="1"/>
</dbReference>
<dbReference type="PRINTS" id="PR00727">
    <property type="entry name" value="LEADERPTASE"/>
</dbReference>
<dbReference type="SUPFAM" id="SSF51306">
    <property type="entry name" value="LexA/Signal peptidase"/>
    <property type="match status" value="1"/>
</dbReference>
<dbReference type="PROSITE" id="PS00501">
    <property type="entry name" value="SPASE_I_1"/>
    <property type="match status" value="1"/>
</dbReference>
<dbReference type="PROSITE" id="PS00760">
    <property type="entry name" value="SPASE_I_2"/>
    <property type="match status" value="1"/>
</dbReference>
<dbReference type="PROSITE" id="PS00761">
    <property type="entry name" value="SPASE_I_3"/>
    <property type="match status" value="1"/>
</dbReference>
<proteinExistence type="inferred from homology"/>
<evidence type="ECO:0000250" key="1"/>
<evidence type="ECO:0000255" key="2"/>
<evidence type="ECO:0000305" key="3"/>
<accession>P0A1W2</accession>
<accession>P23697</accession>
<protein>
    <recommendedName>
        <fullName>Signal peptidase I</fullName>
        <shortName>SPase I</shortName>
        <ecNumber>3.4.21.89</ecNumber>
    </recommendedName>
    <alternativeName>
        <fullName>Leader peptidase I</fullName>
    </alternativeName>
</protein>
<name>LEP_SALTY</name>
<reference key="1">
    <citation type="journal article" date="1990" name="Mol. Gen. Genet.">
        <title>Molecular cloning of the Salmonella typhimurium lep gene in Escherichia coli.</title>
        <authorList>
            <person name="van Dijl J.M."/>
            <person name="van den Bergh R."/>
            <person name="Reversma T."/>
            <person name="Smith H."/>
            <person name="Bron S."/>
            <person name="Venema G."/>
        </authorList>
    </citation>
    <scope>NUCLEOTIDE SEQUENCE [GENOMIC DNA]</scope>
    <source>
        <strain>PP1139</strain>
    </source>
</reference>
<reference key="2">
    <citation type="journal article" date="2001" name="Nature">
        <title>Complete genome sequence of Salmonella enterica serovar Typhimurium LT2.</title>
        <authorList>
            <person name="McClelland M."/>
            <person name="Sanderson K.E."/>
            <person name="Spieth J."/>
            <person name="Clifton S.W."/>
            <person name="Latreille P."/>
            <person name="Courtney L."/>
            <person name="Porwollik S."/>
            <person name="Ali J."/>
            <person name="Dante M."/>
            <person name="Du F."/>
            <person name="Hou S."/>
            <person name="Layman D."/>
            <person name="Leonard S."/>
            <person name="Nguyen C."/>
            <person name="Scott K."/>
            <person name="Holmes A."/>
            <person name="Grewal N."/>
            <person name="Mulvaney E."/>
            <person name="Ryan E."/>
            <person name="Sun H."/>
            <person name="Florea L."/>
            <person name="Miller W."/>
            <person name="Stoneking T."/>
            <person name="Nhan M."/>
            <person name="Waterston R."/>
            <person name="Wilson R.K."/>
        </authorList>
    </citation>
    <scope>NUCLEOTIDE SEQUENCE [LARGE SCALE GENOMIC DNA]</scope>
    <source>
        <strain>LT2 / SGSC1412 / ATCC 700720</strain>
    </source>
</reference>
<keyword id="KW-0997">Cell inner membrane</keyword>
<keyword id="KW-1003">Cell membrane</keyword>
<keyword id="KW-0378">Hydrolase</keyword>
<keyword id="KW-0472">Membrane</keyword>
<keyword id="KW-0645">Protease</keyword>
<keyword id="KW-1185">Reference proteome</keyword>
<keyword id="KW-0812">Transmembrane</keyword>
<keyword id="KW-1133">Transmembrane helix</keyword>
<organism>
    <name type="scientific">Salmonella typhimurium (strain LT2 / SGSC1412 / ATCC 700720)</name>
    <dbReference type="NCBI Taxonomy" id="99287"/>
    <lineage>
        <taxon>Bacteria</taxon>
        <taxon>Pseudomonadati</taxon>
        <taxon>Pseudomonadota</taxon>
        <taxon>Gammaproteobacteria</taxon>
        <taxon>Enterobacterales</taxon>
        <taxon>Enterobacteriaceae</taxon>
        <taxon>Salmonella</taxon>
    </lineage>
</organism>
<comment type="catalytic activity">
    <reaction>
        <text>Cleavage of hydrophobic, N-terminal signal or leader sequences from secreted and periplasmic proteins.</text>
        <dbReference type="EC" id="3.4.21.89"/>
    </reaction>
</comment>
<comment type="subcellular location">
    <subcellularLocation>
        <location evidence="1">Cell inner membrane</location>
        <topology evidence="1">Multi-pass membrane protein</topology>
    </subcellularLocation>
</comment>
<comment type="similarity">
    <text evidence="3">Belongs to the peptidase S26 family.</text>
</comment>
<feature type="chain" id="PRO_0000109518" description="Signal peptidase I">
    <location>
        <begin position="1"/>
        <end position="324"/>
    </location>
</feature>
<feature type="topological domain" description="Periplasmic" evidence="2">
    <location>
        <begin position="1"/>
        <end position="3"/>
    </location>
</feature>
<feature type="transmembrane region" description="Helical" evidence="2">
    <location>
        <begin position="4"/>
        <end position="22"/>
    </location>
</feature>
<feature type="topological domain" description="Cytoplasmic" evidence="2">
    <location>
        <begin position="23"/>
        <end position="58"/>
    </location>
</feature>
<feature type="transmembrane region" description="Helical" evidence="2">
    <location>
        <begin position="59"/>
        <end position="77"/>
    </location>
</feature>
<feature type="topological domain" description="Periplasmic" evidence="2">
    <location>
        <begin position="78"/>
        <end position="324"/>
    </location>
</feature>
<feature type="active site" evidence="1">
    <location>
        <position position="91"/>
    </location>
</feature>
<feature type="active site" evidence="1">
    <location>
        <position position="146"/>
    </location>
</feature>